<sequence>MKLLLLLVISASMLLECLVNADGYIRKKDGCKVSCIIGNEGCRKECVAHGGSFGYCWTWGLACWCENLPDAVTWKSSTNTCGRKK</sequence>
<organism>
    <name type="scientific">Hottentotta judaicus</name>
    <name type="common">Black scorpion</name>
    <name type="synonym">Buthotus judaicus</name>
    <dbReference type="NCBI Taxonomy" id="6863"/>
    <lineage>
        <taxon>Eukaryota</taxon>
        <taxon>Metazoa</taxon>
        <taxon>Ecdysozoa</taxon>
        <taxon>Arthropoda</taxon>
        <taxon>Chelicerata</taxon>
        <taxon>Arachnida</taxon>
        <taxon>Scorpiones</taxon>
        <taxon>Buthida</taxon>
        <taxon>Buthoidea</taxon>
        <taxon>Buthidae</taxon>
        <taxon>Hottentotta</taxon>
    </lineage>
</organism>
<comment type="function">
    <text>Depressant insect beta-toxins cause a transient contraction paralysis followed by a slow flaccid paralysis. They bind voltage-independently at site-4 of sodium channels (Nav) and shift the voltage of activation toward more negative potentials thereby affecting sodium channel activation and promoting spontaneous and repetitive firing. This toxin is active only on insects.</text>
</comment>
<comment type="subcellular location">
    <subcellularLocation>
        <location>Secreted</location>
    </subcellularLocation>
</comment>
<comment type="tissue specificity">
    <text>Expressed by the venom gland.</text>
</comment>
<comment type="domain">
    <text evidence="4">Has the structural arrangement of an alpha-helix connected to antiparallel beta-sheets by disulfide bonds (CS-alpha/beta).</text>
</comment>
<comment type="PTM">
    <text>C-terminal basic residues are removed by a carboxypeptidase.</text>
</comment>
<comment type="similarity">
    <text evidence="4">Belongs to the long (4 C-C) scorpion toxin superfamily. Sodium channel inhibitor family. Beta subfamily.</text>
</comment>
<dbReference type="EMBL" id="S55535">
    <property type="protein sequence ID" value="AAB25385.1"/>
    <property type="molecule type" value="mRNA"/>
</dbReference>
<dbReference type="PIR" id="A40472">
    <property type="entry name" value="A40472"/>
</dbReference>
<dbReference type="SMR" id="P24336"/>
<dbReference type="GO" id="GO:0005576">
    <property type="term" value="C:extracellular region"/>
    <property type="evidence" value="ECO:0007669"/>
    <property type="project" value="UniProtKB-SubCell"/>
</dbReference>
<dbReference type="GO" id="GO:0019871">
    <property type="term" value="F:sodium channel inhibitor activity"/>
    <property type="evidence" value="ECO:0007669"/>
    <property type="project" value="InterPro"/>
</dbReference>
<dbReference type="GO" id="GO:0090729">
    <property type="term" value="F:toxin activity"/>
    <property type="evidence" value="ECO:0007669"/>
    <property type="project" value="UniProtKB-KW"/>
</dbReference>
<dbReference type="GO" id="GO:0006952">
    <property type="term" value="P:defense response"/>
    <property type="evidence" value="ECO:0007669"/>
    <property type="project" value="InterPro"/>
</dbReference>
<dbReference type="CDD" id="cd23106">
    <property type="entry name" value="neurotoxins_LC_scorpion"/>
    <property type="match status" value="1"/>
</dbReference>
<dbReference type="FunFam" id="3.30.30.10:FF:000002">
    <property type="entry name" value="Alpha-like toxin BmK-M1"/>
    <property type="match status" value="1"/>
</dbReference>
<dbReference type="Gene3D" id="3.30.30.10">
    <property type="entry name" value="Knottin, scorpion toxin-like"/>
    <property type="match status" value="1"/>
</dbReference>
<dbReference type="InterPro" id="IPR044062">
    <property type="entry name" value="LCN-type_CS_alpha_beta_dom"/>
</dbReference>
<dbReference type="InterPro" id="IPR003614">
    <property type="entry name" value="Scorpion_toxin-like"/>
</dbReference>
<dbReference type="InterPro" id="IPR036574">
    <property type="entry name" value="Scorpion_toxin-like_sf"/>
</dbReference>
<dbReference type="InterPro" id="IPR018218">
    <property type="entry name" value="Scorpion_toxinL"/>
</dbReference>
<dbReference type="InterPro" id="IPR002061">
    <property type="entry name" value="Scorpion_toxinL/defensin"/>
</dbReference>
<dbReference type="Pfam" id="PF00537">
    <property type="entry name" value="Toxin_3"/>
    <property type="match status" value="1"/>
</dbReference>
<dbReference type="PRINTS" id="PR00285">
    <property type="entry name" value="SCORPNTOXIN"/>
</dbReference>
<dbReference type="SMART" id="SM00505">
    <property type="entry name" value="Knot1"/>
    <property type="match status" value="1"/>
</dbReference>
<dbReference type="SUPFAM" id="SSF57095">
    <property type="entry name" value="Scorpion toxin-like"/>
    <property type="match status" value="1"/>
</dbReference>
<dbReference type="PROSITE" id="PS51863">
    <property type="entry name" value="LCN_CSAB"/>
    <property type="match status" value="1"/>
</dbReference>
<accession>P24336</accession>
<name>SIX2_HOTJU</name>
<protein>
    <recommendedName>
        <fullName>Beta-insect depressant toxin BjIT2</fullName>
        <shortName>IT-2</shortName>
    </recommendedName>
</protein>
<proteinExistence type="evidence at protein level"/>
<reference key="1">
    <citation type="journal article" date="1991" name="Toxicon">
        <title>The cDNA sequence of a depressant insect selective neurotoxin from the scorpion Buthotus judaicus.</title>
        <authorList>
            <person name="Zilberberg N."/>
            <person name="Zlotkin E."/>
            <person name="Gurevitz M."/>
        </authorList>
    </citation>
    <scope>NUCLEOTIDE SEQUENCE [MRNA]</scope>
</reference>
<reference key="2">
    <citation type="journal article" date="1993" name="Arch. Insect Biochem. Physiol.">
        <title>Depressant insect selective neurotoxins from scorpion venom: chemistry, action, and gene cloning.</title>
        <authorList>
            <person name="Zlotkin E."/>
            <person name="Gurevitz M."/>
            <person name="Fowler E."/>
            <person name="Adams M.E."/>
        </authorList>
    </citation>
    <scope>NUCLEOTIDE SEQUENCE [MRNA]</scope>
</reference>
<reference key="3">
    <citation type="journal article" date="1990" name="Toxicon">
        <title>On the chemistry and action of the depressant insect toxins.</title>
        <authorList>
            <person name="Zlotkin E."/>
            <person name="Fowler E."/>
            <person name="Eitan M."/>
            <person name="Moyer M."/>
            <person name="Adams M.E."/>
        </authorList>
    </citation>
    <scope>PROTEIN SEQUENCE OF 22-82</scope>
    <source>
        <tissue>Venom</tissue>
    </source>
</reference>
<reference key="4">
    <citation type="journal article" date="1991" name="Biochemistry">
        <title>Functional duality and structural uniqueness of depressant insect-selective neurotoxins.</title>
        <authorList>
            <person name="Zlotkin E."/>
            <person name="Eitan M."/>
            <person name="Bindokas V.P."/>
            <person name="Adams M.E."/>
            <person name="Moyer M."/>
            <person name="Burkhart W."/>
            <person name="Fowler E."/>
        </authorList>
    </citation>
    <scope>PROTEIN SEQUENCE OF 22-82</scope>
    <scope>CHARACTERIZATION</scope>
    <source>
        <tissue>Venom</tissue>
    </source>
</reference>
<evidence type="ECO:0000255" key="1">
    <source>
        <dbReference type="PROSITE-ProRule" id="PRU01210"/>
    </source>
</evidence>
<evidence type="ECO:0000269" key="2">
    <source>
    </source>
</evidence>
<evidence type="ECO:0000269" key="3">
    <source ref="3"/>
</evidence>
<evidence type="ECO:0000305" key="4"/>
<keyword id="KW-0903">Direct protein sequencing</keyword>
<keyword id="KW-1015">Disulfide bond</keyword>
<keyword id="KW-0872">Ion channel impairing toxin</keyword>
<keyword id="KW-0528">Neurotoxin</keyword>
<keyword id="KW-0964">Secreted</keyword>
<keyword id="KW-0732">Signal</keyword>
<keyword id="KW-0800">Toxin</keyword>
<keyword id="KW-0738">Voltage-gated sodium channel impairing toxin</keyword>
<feature type="signal peptide" evidence="2 3">
    <location>
        <begin position="1"/>
        <end position="21"/>
    </location>
</feature>
<feature type="chain" id="PRO_0000035197" description="Beta-insect depressant toxin BjIT2">
    <location>
        <begin position="22"/>
        <end position="82"/>
    </location>
</feature>
<feature type="propeptide" id="PRO_0000035198" description="Removed by a carboxypeptidase">
    <location>
        <begin position="83"/>
        <end position="85"/>
    </location>
</feature>
<feature type="domain" description="LCN-type CS-alpha/beta" evidence="1">
    <location>
        <begin position="22"/>
        <end position="82"/>
    </location>
</feature>
<feature type="disulfide bond" evidence="1">
    <location>
        <begin position="31"/>
        <end position="81"/>
    </location>
</feature>
<feature type="disulfide bond" evidence="1">
    <location>
        <begin position="35"/>
        <end position="56"/>
    </location>
</feature>
<feature type="disulfide bond" evidence="1">
    <location>
        <begin position="42"/>
        <end position="63"/>
    </location>
</feature>
<feature type="disulfide bond" evidence="1">
    <location>
        <begin position="46"/>
        <end position="65"/>
    </location>
</feature>